<proteinExistence type="evidence at protein level"/>
<protein>
    <recommendedName>
        <fullName>Ras-like protein rasD</fullName>
        <ecNumber evidence="4">3.6.5.2</ecNumber>
    </recommendedName>
    <alternativeName>
        <fullName>Transforming protein p23 homolog</fullName>
    </alternativeName>
</protein>
<reference key="1">
    <citation type="journal article" date="1984" name="Cell">
        <title>Developmental regulation of a Dictyostelium gene encoding a protein homologous to mammalian ras protein.</title>
        <authorList>
            <person name="Reymond C.D."/>
            <person name="Gomer R.H."/>
            <person name="Mehdy M.C."/>
            <person name="Firtel R.A."/>
        </authorList>
    </citation>
    <scope>NUCLEOTIDE SEQUENCE [GENOMIC DNA]</scope>
    <source>
        <strain>AX3</strain>
    </source>
</reference>
<reference key="2">
    <citation type="journal article" date="1991" name="Genes Dev.">
        <title>cAMP and cell sorting control the spatial expression of a developmentally essential cell-type-specific ras gene in Dictyostelium.</title>
        <authorList>
            <person name="Esch R.K."/>
            <person name="Firtel R.A."/>
        </authorList>
    </citation>
    <scope>SEQUENCE REVISION TO 137-143</scope>
    <source>
        <strain>AX3</strain>
    </source>
</reference>
<reference key="3">
    <citation type="journal article" date="2005" name="Nature">
        <title>The genome of the social amoeba Dictyostelium discoideum.</title>
        <authorList>
            <person name="Eichinger L."/>
            <person name="Pachebat J.A."/>
            <person name="Gloeckner G."/>
            <person name="Rajandream M.A."/>
            <person name="Sucgang R."/>
            <person name="Berriman M."/>
            <person name="Song J."/>
            <person name="Olsen R."/>
            <person name="Szafranski K."/>
            <person name="Xu Q."/>
            <person name="Tunggal B."/>
            <person name="Kummerfeld S."/>
            <person name="Madera M."/>
            <person name="Konfortov B.A."/>
            <person name="Rivero F."/>
            <person name="Bankier A.T."/>
            <person name="Lehmann R."/>
            <person name="Hamlin N."/>
            <person name="Davies R."/>
            <person name="Gaudet P."/>
            <person name="Fey P."/>
            <person name="Pilcher K."/>
            <person name="Chen G."/>
            <person name="Saunders D."/>
            <person name="Sodergren E.J."/>
            <person name="Davis P."/>
            <person name="Kerhornou A."/>
            <person name="Nie X."/>
            <person name="Hall N."/>
            <person name="Anjard C."/>
            <person name="Hemphill L."/>
            <person name="Bason N."/>
            <person name="Farbrother P."/>
            <person name="Desany B."/>
            <person name="Just E."/>
            <person name="Morio T."/>
            <person name="Rost R."/>
            <person name="Churcher C.M."/>
            <person name="Cooper J."/>
            <person name="Haydock S."/>
            <person name="van Driessche N."/>
            <person name="Cronin A."/>
            <person name="Goodhead I."/>
            <person name="Muzny D.M."/>
            <person name="Mourier T."/>
            <person name="Pain A."/>
            <person name="Lu M."/>
            <person name="Harper D."/>
            <person name="Lindsay R."/>
            <person name="Hauser H."/>
            <person name="James K.D."/>
            <person name="Quiles M."/>
            <person name="Madan Babu M."/>
            <person name="Saito T."/>
            <person name="Buchrieser C."/>
            <person name="Wardroper A."/>
            <person name="Felder M."/>
            <person name="Thangavelu M."/>
            <person name="Johnson D."/>
            <person name="Knights A."/>
            <person name="Loulseged H."/>
            <person name="Mungall K.L."/>
            <person name="Oliver K."/>
            <person name="Price C."/>
            <person name="Quail M.A."/>
            <person name="Urushihara H."/>
            <person name="Hernandez J."/>
            <person name="Rabbinowitsch E."/>
            <person name="Steffen D."/>
            <person name="Sanders M."/>
            <person name="Ma J."/>
            <person name="Kohara Y."/>
            <person name="Sharp S."/>
            <person name="Simmonds M.N."/>
            <person name="Spiegler S."/>
            <person name="Tivey A."/>
            <person name="Sugano S."/>
            <person name="White B."/>
            <person name="Walker D."/>
            <person name="Woodward J.R."/>
            <person name="Winckler T."/>
            <person name="Tanaka Y."/>
            <person name="Shaulsky G."/>
            <person name="Schleicher M."/>
            <person name="Weinstock G.M."/>
            <person name="Rosenthal A."/>
            <person name="Cox E.C."/>
            <person name="Chisholm R.L."/>
            <person name="Gibbs R.A."/>
            <person name="Loomis W.F."/>
            <person name="Platzer M."/>
            <person name="Kay R.R."/>
            <person name="Williams J.G."/>
            <person name="Dear P.H."/>
            <person name="Noegel A.A."/>
            <person name="Barrell B.G."/>
            <person name="Kuspa A."/>
        </authorList>
    </citation>
    <scope>NUCLEOTIDE SEQUENCE [LARGE SCALE GENOMIC DNA]</scope>
    <source>
        <strain>AX4</strain>
    </source>
</reference>
<reference key="4">
    <citation type="journal article" date="2008" name="Curr. Biol.">
        <title>Spatiotemporal regulation of Ras activity provides directional sensing.</title>
        <authorList>
            <person name="Zhang S."/>
            <person name="Charest P.G."/>
            <person name="Firtel R.A."/>
        </authorList>
    </citation>
    <scope>FUNCTION</scope>
    <scope>CATALYTIC ACTIVITY</scope>
</reference>
<comment type="function">
    <text evidence="2">Ras proteins bind GDP/GTP and possess intrinsic GTPase activity.</text>
</comment>
<comment type="catalytic activity">
    <reaction evidence="4">
        <text>GTP + H2O = GDP + phosphate + H(+)</text>
        <dbReference type="Rhea" id="RHEA:19669"/>
        <dbReference type="ChEBI" id="CHEBI:15377"/>
        <dbReference type="ChEBI" id="CHEBI:15378"/>
        <dbReference type="ChEBI" id="CHEBI:37565"/>
        <dbReference type="ChEBI" id="CHEBI:43474"/>
        <dbReference type="ChEBI" id="CHEBI:58189"/>
        <dbReference type="EC" id="3.6.5.2"/>
    </reaction>
</comment>
<comment type="activity regulation">
    <text>Alternates between an inactive form bound to GDP and an active form bound to GTP. Activated by a guanine nucleotide-exchange factor (GEF) and inactivated by a GTPase-activating protein (GAP).</text>
</comment>
<comment type="subcellular location">
    <subcellularLocation>
        <location evidence="3">Cell membrane</location>
        <topology evidence="3">Lipid-anchor</topology>
        <orientation evidence="3">Cytoplasmic side</orientation>
    </subcellularLocation>
</comment>
<comment type="developmental stage">
    <text>Expressed at a low level in vegetative cells; not expressed between the onset of development and aggregation, and is then re-expressed in the multicellular aggregate stages.</text>
</comment>
<comment type="similarity">
    <text evidence="3">Belongs to the small GTPase superfamily. Ras family.</text>
</comment>
<name>RASD_DICDI</name>
<gene>
    <name type="primary">rasD</name>
    <name type="synonym">ras</name>
    <name type="synonym">rasA</name>
    <name type="ORF">DDB_G0292996</name>
</gene>
<organism>
    <name type="scientific">Dictyostelium discoideum</name>
    <name type="common">Social amoeba</name>
    <dbReference type="NCBI Taxonomy" id="44689"/>
    <lineage>
        <taxon>Eukaryota</taxon>
        <taxon>Amoebozoa</taxon>
        <taxon>Evosea</taxon>
        <taxon>Eumycetozoa</taxon>
        <taxon>Dictyostelia</taxon>
        <taxon>Dictyosteliales</taxon>
        <taxon>Dictyosteliaceae</taxon>
        <taxon>Dictyostelium</taxon>
    </lineage>
</organism>
<dbReference type="EC" id="3.6.5.2" evidence="4"/>
<dbReference type="EMBL" id="Z11804">
    <property type="protein sequence ID" value="CAA77848.1"/>
    <property type="molecule type" value="Genomic_DNA"/>
</dbReference>
<dbReference type="EMBL" id="AAFI02000199">
    <property type="protein sequence ID" value="EAL60850.1"/>
    <property type="molecule type" value="Genomic_DNA"/>
</dbReference>
<dbReference type="PIR" id="A01371">
    <property type="entry name" value="TVDORS"/>
</dbReference>
<dbReference type="RefSeq" id="XP_629338.1">
    <property type="nucleotide sequence ID" value="XM_629336.1"/>
</dbReference>
<dbReference type="SMR" id="P03967"/>
<dbReference type="FunCoup" id="P03967">
    <property type="interactions" value="260"/>
</dbReference>
<dbReference type="STRING" id="44689.P03967"/>
<dbReference type="PaxDb" id="44689-DDB0216195"/>
<dbReference type="ABCD" id="P03967">
    <property type="antibodies" value="1 sequenced antibody"/>
</dbReference>
<dbReference type="EnsemblProtists" id="EAL60850">
    <property type="protein sequence ID" value="EAL60850"/>
    <property type="gene ID" value="DDB_G0292996"/>
</dbReference>
<dbReference type="GeneID" id="8629062"/>
<dbReference type="KEGG" id="ddi:DDB_G0292996"/>
<dbReference type="dictyBase" id="DDB_G0292996">
    <property type="gene designation" value="rasD"/>
</dbReference>
<dbReference type="VEuPathDB" id="AmoebaDB:DDB_G0292996"/>
<dbReference type="eggNOG" id="KOG0395">
    <property type="taxonomic scope" value="Eukaryota"/>
</dbReference>
<dbReference type="HOGENOM" id="CLU_041217_9_8_1"/>
<dbReference type="InParanoid" id="P03967"/>
<dbReference type="OMA" id="CCGGCVI"/>
<dbReference type="PhylomeDB" id="P03967"/>
<dbReference type="PRO" id="PR:P03967"/>
<dbReference type="Proteomes" id="UP000002195">
    <property type="component" value="Chromosome 6"/>
</dbReference>
<dbReference type="GO" id="GO:0005829">
    <property type="term" value="C:cytosol"/>
    <property type="evidence" value="ECO:0000304"/>
    <property type="project" value="dictyBase"/>
</dbReference>
<dbReference type="GO" id="GO:0005811">
    <property type="term" value="C:lipid droplet"/>
    <property type="evidence" value="ECO:0007005"/>
    <property type="project" value="dictyBase"/>
</dbReference>
<dbReference type="GO" id="GO:0070685">
    <property type="term" value="C:macropinocytic cup"/>
    <property type="evidence" value="ECO:0000304"/>
    <property type="project" value="dictyBase"/>
</dbReference>
<dbReference type="GO" id="GO:0005886">
    <property type="term" value="C:plasma membrane"/>
    <property type="evidence" value="ECO:0000314"/>
    <property type="project" value="dictyBase"/>
</dbReference>
<dbReference type="GO" id="GO:0031005">
    <property type="term" value="F:filamin binding"/>
    <property type="evidence" value="ECO:0000353"/>
    <property type="project" value="dictyBase"/>
</dbReference>
<dbReference type="GO" id="GO:0003925">
    <property type="term" value="F:G protein activity"/>
    <property type="evidence" value="ECO:0007669"/>
    <property type="project" value="UniProtKB-EC"/>
</dbReference>
<dbReference type="GO" id="GO:0019003">
    <property type="term" value="F:GDP binding"/>
    <property type="evidence" value="ECO:0000318"/>
    <property type="project" value="GO_Central"/>
</dbReference>
<dbReference type="GO" id="GO:0005525">
    <property type="term" value="F:GTP binding"/>
    <property type="evidence" value="ECO:0000318"/>
    <property type="project" value="GO_Central"/>
</dbReference>
<dbReference type="GO" id="GO:0003924">
    <property type="term" value="F:GTPase activity"/>
    <property type="evidence" value="ECO:0000318"/>
    <property type="project" value="GO_Central"/>
</dbReference>
<dbReference type="GO" id="GO:0051019">
    <property type="term" value="F:mitogen-activated protein kinase binding"/>
    <property type="evidence" value="ECO:0000353"/>
    <property type="project" value="dictyBase"/>
</dbReference>
<dbReference type="GO" id="GO:0043422">
    <property type="term" value="F:protein kinase B binding"/>
    <property type="evidence" value="ECO:0000353"/>
    <property type="project" value="dictyBase"/>
</dbReference>
<dbReference type="GO" id="GO:0004860">
    <property type="term" value="F:protein kinase inhibitor activity"/>
    <property type="evidence" value="ECO:0000315"/>
    <property type="project" value="dictyBase"/>
</dbReference>
<dbReference type="GO" id="GO:0019887">
    <property type="term" value="F:protein kinase regulator activity"/>
    <property type="evidence" value="ECO:0000315"/>
    <property type="project" value="dictyBase"/>
</dbReference>
<dbReference type="GO" id="GO:0140582">
    <property type="term" value="P:adenylate cyclase-activating G protein-coupled cAMP receptor signaling pathway"/>
    <property type="evidence" value="ECO:0000315"/>
    <property type="project" value="dictyBase"/>
</dbReference>
<dbReference type="GO" id="GO:0006935">
    <property type="term" value="P:chemotaxis"/>
    <property type="evidence" value="ECO:0000315"/>
    <property type="project" value="dictyBase"/>
</dbReference>
<dbReference type="GO" id="GO:0070371">
    <property type="term" value="P:ERK1 and ERK2 cascade"/>
    <property type="evidence" value="ECO:0000315"/>
    <property type="project" value="dictyBase"/>
</dbReference>
<dbReference type="GO" id="GO:0000281">
    <property type="term" value="P:mitotic cytokinesis"/>
    <property type="evidence" value="ECO:0000316"/>
    <property type="project" value="dictyBase"/>
</dbReference>
<dbReference type="GO" id="GO:0042331">
    <property type="term" value="P:phototaxis"/>
    <property type="evidence" value="ECO:0000315"/>
    <property type="project" value="dictyBase"/>
</dbReference>
<dbReference type="GO" id="GO:0046956">
    <property type="term" value="P:positive phototaxis"/>
    <property type="evidence" value="ECO:0000314"/>
    <property type="project" value="dictyBase"/>
</dbReference>
<dbReference type="GO" id="GO:1905301">
    <property type="term" value="P:regulation of macropinocytosis"/>
    <property type="evidence" value="ECO:0000316"/>
    <property type="project" value="dictyBase"/>
</dbReference>
<dbReference type="GO" id="GO:0009617">
    <property type="term" value="P:response to bacterium"/>
    <property type="evidence" value="ECO:0007007"/>
    <property type="project" value="dictyBase"/>
</dbReference>
<dbReference type="GO" id="GO:0043052">
    <property type="term" value="P:thermotaxis"/>
    <property type="evidence" value="ECO:0000315"/>
    <property type="project" value="dictyBase"/>
</dbReference>
<dbReference type="CDD" id="cd04138">
    <property type="entry name" value="H_N_K_Ras_like"/>
    <property type="match status" value="1"/>
</dbReference>
<dbReference type="FunFam" id="3.40.50.300:FF:000080">
    <property type="entry name" value="Ras-like GTPase Ras1"/>
    <property type="match status" value="1"/>
</dbReference>
<dbReference type="Gene3D" id="3.40.50.300">
    <property type="entry name" value="P-loop containing nucleotide triphosphate hydrolases"/>
    <property type="match status" value="1"/>
</dbReference>
<dbReference type="InterPro" id="IPR027417">
    <property type="entry name" value="P-loop_NTPase"/>
</dbReference>
<dbReference type="InterPro" id="IPR005225">
    <property type="entry name" value="Small_GTP-bd"/>
</dbReference>
<dbReference type="InterPro" id="IPR001806">
    <property type="entry name" value="Small_GTPase"/>
</dbReference>
<dbReference type="InterPro" id="IPR020849">
    <property type="entry name" value="Small_GTPase_Ras-type"/>
</dbReference>
<dbReference type="NCBIfam" id="TIGR00231">
    <property type="entry name" value="small_GTP"/>
    <property type="match status" value="1"/>
</dbReference>
<dbReference type="PANTHER" id="PTHR24070">
    <property type="entry name" value="RAS, DI-RAS, AND RHEB FAMILY MEMBERS OF SMALL GTPASE SUPERFAMILY"/>
    <property type="match status" value="1"/>
</dbReference>
<dbReference type="Pfam" id="PF00071">
    <property type="entry name" value="Ras"/>
    <property type="match status" value="1"/>
</dbReference>
<dbReference type="PRINTS" id="PR00449">
    <property type="entry name" value="RASTRNSFRMNG"/>
</dbReference>
<dbReference type="SMART" id="SM00175">
    <property type="entry name" value="RAB"/>
    <property type="match status" value="1"/>
</dbReference>
<dbReference type="SMART" id="SM00176">
    <property type="entry name" value="RAN"/>
    <property type="match status" value="1"/>
</dbReference>
<dbReference type="SMART" id="SM00173">
    <property type="entry name" value="RAS"/>
    <property type="match status" value="1"/>
</dbReference>
<dbReference type="SMART" id="SM00174">
    <property type="entry name" value="RHO"/>
    <property type="match status" value="1"/>
</dbReference>
<dbReference type="SUPFAM" id="SSF52540">
    <property type="entry name" value="P-loop containing nucleoside triphosphate hydrolases"/>
    <property type="match status" value="1"/>
</dbReference>
<dbReference type="PROSITE" id="PS51421">
    <property type="entry name" value="RAS"/>
    <property type="match status" value="1"/>
</dbReference>
<feature type="chain" id="PRO_0000082662" description="Ras-like protein rasD">
    <location>
        <begin position="1"/>
        <end position="184"/>
    </location>
</feature>
<feature type="propeptide" id="PRO_0000281310" description="Removed in mature form" evidence="1">
    <location>
        <begin position="185"/>
        <end position="187"/>
    </location>
</feature>
<feature type="short sequence motif" description="Effector region">
    <location>
        <begin position="32"/>
        <end position="40"/>
    </location>
</feature>
<feature type="binding site" evidence="1">
    <location>
        <begin position="10"/>
        <end position="17"/>
    </location>
    <ligand>
        <name>GTP</name>
        <dbReference type="ChEBI" id="CHEBI:37565"/>
    </ligand>
</feature>
<feature type="binding site" evidence="1">
    <location>
        <begin position="57"/>
        <end position="61"/>
    </location>
    <ligand>
        <name>GTP</name>
        <dbReference type="ChEBI" id="CHEBI:37565"/>
    </ligand>
</feature>
<feature type="binding site" evidence="1">
    <location>
        <begin position="116"/>
        <end position="119"/>
    </location>
    <ligand>
        <name>GTP</name>
        <dbReference type="ChEBI" id="CHEBI:37565"/>
    </ligand>
</feature>
<feature type="modified residue" description="Cysteine methyl ester" evidence="1">
    <location>
        <position position="184"/>
    </location>
</feature>
<feature type="lipid moiety-binding region" description="S-geranylgeranyl cysteine" evidence="1">
    <location>
        <position position="184"/>
    </location>
</feature>
<evidence type="ECO:0000250" key="1"/>
<evidence type="ECO:0000269" key="2">
    <source>
    </source>
</evidence>
<evidence type="ECO:0000305" key="3"/>
<evidence type="ECO:0000305" key="4">
    <source>
    </source>
</evidence>
<keyword id="KW-1003">Cell membrane</keyword>
<keyword id="KW-0342">GTP-binding</keyword>
<keyword id="KW-0378">Hydrolase</keyword>
<keyword id="KW-0449">Lipoprotein</keyword>
<keyword id="KW-0472">Membrane</keyword>
<keyword id="KW-0488">Methylation</keyword>
<keyword id="KW-0547">Nucleotide-binding</keyword>
<keyword id="KW-0636">Prenylation</keyword>
<keyword id="KW-1185">Reference proteome</keyword>
<accession>P03967</accession>
<accession>Q54C81</accession>
<sequence length="187" mass="21202">MTEYKLVIVGGGGVGKSALTIQLIQNHFIDEYDPTIEDSYRKQVSIDDETCLLDILDTAGQEEYSAMRDQYMRTGQGFLCVYSITSRSSYDEIASFREQILRVKDKDRVPLILVGNKADLDHERQVSVNEGQELAKGFNCPFMESSAKSRINVEEAFYSLVREIRKELKGDQSSGKAQKKKKQCLIL</sequence>